<comment type="function">
    <text evidence="1">One of the primary rRNA binding proteins, it binds directly to 16S rRNA where it helps nucleate assembly of the platform of the 30S subunit by binding and bridging several RNA helices of the 16S rRNA.</text>
</comment>
<comment type="function">
    <text evidence="1">Forms an intersubunit bridge (bridge B4) with the 23S rRNA of the 50S subunit in the ribosome.</text>
</comment>
<comment type="subunit">
    <text evidence="1">Part of the 30S ribosomal subunit. Forms a bridge to the 50S subunit in the 70S ribosome, contacting the 23S rRNA.</text>
</comment>
<comment type="similarity">
    <text evidence="1">Belongs to the universal ribosomal protein uS15 family.</text>
</comment>
<protein>
    <recommendedName>
        <fullName evidence="1">Small ribosomal subunit protein uS15</fullName>
    </recommendedName>
    <alternativeName>
        <fullName evidence="2">30S ribosomal protein S15</fullName>
    </alternativeName>
</protein>
<feature type="chain" id="PRO_1000143094" description="Small ribosomal subunit protein uS15">
    <location>
        <begin position="1"/>
        <end position="89"/>
    </location>
</feature>
<reference key="1">
    <citation type="submission" date="2008-06" db="EMBL/GenBank/DDBJ databases">
        <title>Complete sequence of Chloroherpeton thalassium ATCC 35110.</title>
        <authorList>
            <consortium name="US DOE Joint Genome Institute"/>
            <person name="Lucas S."/>
            <person name="Copeland A."/>
            <person name="Lapidus A."/>
            <person name="Glavina del Rio T."/>
            <person name="Dalin E."/>
            <person name="Tice H."/>
            <person name="Bruce D."/>
            <person name="Goodwin L."/>
            <person name="Pitluck S."/>
            <person name="Schmutz J."/>
            <person name="Larimer F."/>
            <person name="Land M."/>
            <person name="Hauser L."/>
            <person name="Kyrpides N."/>
            <person name="Mikhailova N."/>
            <person name="Liu Z."/>
            <person name="Li T."/>
            <person name="Zhao F."/>
            <person name="Overmann J."/>
            <person name="Bryant D.A."/>
            <person name="Richardson P."/>
        </authorList>
    </citation>
    <scope>NUCLEOTIDE SEQUENCE [LARGE SCALE GENOMIC DNA]</scope>
    <source>
        <strain>ATCC 35110 / GB-78</strain>
    </source>
</reference>
<gene>
    <name evidence="1" type="primary">rpsO</name>
    <name type="ordered locus">Ctha_1237</name>
</gene>
<name>RS15_CHLT3</name>
<sequence length="89" mass="10297">MSITKEKKTELITRYGGAATNTGLPEVEIAIMTERINNLTEHLKVHKKDNHTRSGLLKLVGKRKRLLNYLTKVDVLRYRKIIAELNIRK</sequence>
<dbReference type="EMBL" id="CP001100">
    <property type="protein sequence ID" value="ACF13700.1"/>
    <property type="molecule type" value="Genomic_DNA"/>
</dbReference>
<dbReference type="RefSeq" id="WP_012499784.1">
    <property type="nucleotide sequence ID" value="NC_011026.1"/>
</dbReference>
<dbReference type="SMR" id="B3QZ07"/>
<dbReference type="STRING" id="517418.Ctha_1237"/>
<dbReference type="KEGG" id="cts:Ctha_1237"/>
<dbReference type="eggNOG" id="COG0184">
    <property type="taxonomic scope" value="Bacteria"/>
</dbReference>
<dbReference type="HOGENOM" id="CLU_148518_0_0_10"/>
<dbReference type="OrthoDB" id="9799262at2"/>
<dbReference type="Proteomes" id="UP000001208">
    <property type="component" value="Chromosome"/>
</dbReference>
<dbReference type="GO" id="GO:0022627">
    <property type="term" value="C:cytosolic small ribosomal subunit"/>
    <property type="evidence" value="ECO:0007669"/>
    <property type="project" value="TreeGrafter"/>
</dbReference>
<dbReference type="GO" id="GO:0019843">
    <property type="term" value="F:rRNA binding"/>
    <property type="evidence" value="ECO:0007669"/>
    <property type="project" value="UniProtKB-UniRule"/>
</dbReference>
<dbReference type="GO" id="GO:0003735">
    <property type="term" value="F:structural constituent of ribosome"/>
    <property type="evidence" value="ECO:0007669"/>
    <property type="project" value="InterPro"/>
</dbReference>
<dbReference type="GO" id="GO:0006412">
    <property type="term" value="P:translation"/>
    <property type="evidence" value="ECO:0007669"/>
    <property type="project" value="UniProtKB-UniRule"/>
</dbReference>
<dbReference type="CDD" id="cd00353">
    <property type="entry name" value="Ribosomal_S15p_S13e"/>
    <property type="match status" value="1"/>
</dbReference>
<dbReference type="FunFam" id="1.10.287.10:FF:000002">
    <property type="entry name" value="30S ribosomal protein S15"/>
    <property type="match status" value="1"/>
</dbReference>
<dbReference type="Gene3D" id="6.10.250.3130">
    <property type="match status" value="1"/>
</dbReference>
<dbReference type="Gene3D" id="1.10.287.10">
    <property type="entry name" value="S15/NS1, RNA-binding"/>
    <property type="match status" value="1"/>
</dbReference>
<dbReference type="HAMAP" id="MF_01343_B">
    <property type="entry name" value="Ribosomal_uS15_B"/>
    <property type="match status" value="1"/>
</dbReference>
<dbReference type="InterPro" id="IPR000589">
    <property type="entry name" value="Ribosomal_uS15"/>
</dbReference>
<dbReference type="InterPro" id="IPR005290">
    <property type="entry name" value="Ribosomal_uS15_bac-type"/>
</dbReference>
<dbReference type="InterPro" id="IPR009068">
    <property type="entry name" value="uS15_NS1_RNA-bd_sf"/>
</dbReference>
<dbReference type="NCBIfam" id="TIGR00952">
    <property type="entry name" value="S15_bact"/>
    <property type="match status" value="1"/>
</dbReference>
<dbReference type="PANTHER" id="PTHR23321">
    <property type="entry name" value="RIBOSOMAL PROTEIN S15, BACTERIAL AND ORGANELLAR"/>
    <property type="match status" value="1"/>
</dbReference>
<dbReference type="PANTHER" id="PTHR23321:SF26">
    <property type="entry name" value="SMALL RIBOSOMAL SUBUNIT PROTEIN US15M"/>
    <property type="match status" value="1"/>
</dbReference>
<dbReference type="Pfam" id="PF00312">
    <property type="entry name" value="Ribosomal_S15"/>
    <property type="match status" value="1"/>
</dbReference>
<dbReference type="SMART" id="SM01387">
    <property type="entry name" value="Ribosomal_S15"/>
    <property type="match status" value="1"/>
</dbReference>
<dbReference type="SUPFAM" id="SSF47060">
    <property type="entry name" value="S15/NS1 RNA-binding domain"/>
    <property type="match status" value="1"/>
</dbReference>
<dbReference type="PROSITE" id="PS00362">
    <property type="entry name" value="RIBOSOMAL_S15"/>
    <property type="match status" value="1"/>
</dbReference>
<proteinExistence type="inferred from homology"/>
<keyword id="KW-1185">Reference proteome</keyword>
<keyword id="KW-0687">Ribonucleoprotein</keyword>
<keyword id="KW-0689">Ribosomal protein</keyword>
<keyword id="KW-0694">RNA-binding</keyword>
<keyword id="KW-0699">rRNA-binding</keyword>
<organism>
    <name type="scientific">Chloroherpeton thalassium (strain ATCC 35110 / GB-78)</name>
    <dbReference type="NCBI Taxonomy" id="517418"/>
    <lineage>
        <taxon>Bacteria</taxon>
        <taxon>Pseudomonadati</taxon>
        <taxon>Chlorobiota</taxon>
        <taxon>Chlorobiia</taxon>
        <taxon>Chlorobiales</taxon>
        <taxon>Chloroherpetonaceae</taxon>
        <taxon>Chloroherpeton</taxon>
    </lineage>
</organism>
<accession>B3QZ07</accession>
<evidence type="ECO:0000255" key="1">
    <source>
        <dbReference type="HAMAP-Rule" id="MF_01343"/>
    </source>
</evidence>
<evidence type="ECO:0000305" key="2"/>